<evidence type="ECO:0000250" key="1">
    <source>
        <dbReference type="UniProtKB" id="P04698"/>
    </source>
</evidence>
<evidence type="ECO:0000255" key="2"/>
<evidence type="ECO:0000269" key="3">
    <source>
    </source>
</evidence>
<evidence type="ECO:0000303" key="4">
    <source>
    </source>
</evidence>
<evidence type="ECO:0000305" key="5"/>
<evidence type="ECO:0000305" key="6">
    <source>
    </source>
</evidence>
<accession>P06677</accession>
<name>ZEA9_MAIZE</name>
<keyword id="KW-1185">Reference proteome</keyword>
<keyword id="KW-0677">Repeat</keyword>
<keyword id="KW-0708">Seed storage protein</keyword>
<keyword id="KW-0732">Signal</keyword>
<keyword id="KW-0758">Storage protein</keyword>
<organism>
    <name type="scientific">Zea mays</name>
    <name type="common">Maize</name>
    <dbReference type="NCBI Taxonomy" id="4577"/>
    <lineage>
        <taxon>Eukaryota</taxon>
        <taxon>Viridiplantae</taxon>
        <taxon>Streptophyta</taxon>
        <taxon>Embryophyta</taxon>
        <taxon>Tracheophyta</taxon>
        <taxon>Spermatophyta</taxon>
        <taxon>Magnoliopsida</taxon>
        <taxon>Liliopsida</taxon>
        <taxon>Poales</taxon>
        <taxon>Poaceae</taxon>
        <taxon>PACMAD clade</taxon>
        <taxon>Panicoideae</taxon>
        <taxon>Andropogonodae</taxon>
        <taxon>Andropogoneae</taxon>
        <taxon>Tripsacinae</taxon>
        <taxon>Zea</taxon>
    </lineage>
</organism>
<sequence>MATKIFSLLMLLALSTCVANATIFPQCSQAPIASLLPPYLPSIIASICENPALQPYRLQQAIAASNIPLSPLLFQQSPALSLVQSLVQTIRAQQLQQLVLPLINQVALANLSPYSQQQQFLPFNQLSTLNPAAYLQQQLLPFSQLATAYSQQQQLLPFNQLAALNPAAYLQQQILLPFSQLAAANRASFLTQQQLLPFYQQFAANPATLLQLQQLLPFVQLALTDPAASYQQHIIGGALF</sequence>
<reference key="1">
    <citation type="journal article" date="1985" name="J. Biol. Chem.">
        <title>Nucleotide sequence analysis of zein mRNAs from maize endosperm.</title>
        <authorList>
            <person name="Marks M.D."/>
            <person name="Lindell J.S."/>
            <person name="Larkins B.A."/>
        </authorList>
    </citation>
    <scope>NUCLEOTIDE SEQUENCE [MRNA]</scope>
</reference>
<reference key="2">
    <citation type="journal article" date="2016" name="PLoS Genet.">
        <title>Maize opaque10 encodes a cereal-specific protein that is essential for the proper distribution of zeins in endosperm protein bodies.</title>
        <authorList>
            <person name="Yao D."/>
            <person name="Qi W."/>
            <person name="Li X."/>
            <person name="Yang Q."/>
            <person name="Yan S."/>
            <person name="Ling H."/>
            <person name="Wang G."/>
            <person name="Wang G."/>
            <person name="Song R."/>
        </authorList>
    </citation>
    <scope>INTERACTION WITH OP10</scope>
</reference>
<protein>
    <recommendedName>
        <fullName evidence="4">Zein-alpha 19C2</fullName>
    </recommendedName>
    <alternativeName>
        <fullName evidence="4">19 kDa alpha-zein 19C2</fullName>
    </alternativeName>
</protein>
<feature type="signal peptide" evidence="2">
    <location>
        <begin position="1"/>
        <end position="21"/>
    </location>
</feature>
<feature type="chain" id="PRO_0000041619" description="Zein-alpha 19C2">
    <location>
        <begin position="22"/>
        <end position="240"/>
    </location>
</feature>
<proteinExistence type="evidence at protein level"/>
<dbReference type="EMBL" id="M12145">
    <property type="protein sequence ID" value="AAA33530.1"/>
    <property type="molecule type" value="mRNA"/>
</dbReference>
<dbReference type="PIR" id="H24557">
    <property type="entry name" value="ZIZM92"/>
</dbReference>
<dbReference type="RefSeq" id="NP_001105746.1">
    <property type="nucleotide sequence ID" value="NM_001112276.1"/>
</dbReference>
<dbReference type="STRING" id="4577.P06677"/>
<dbReference type="PaxDb" id="4577-AF546188.1_FGP007"/>
<dbReference type="EnsemblPlants" id="Zm00001eb303160_T004">
    <property type="protein sequence ID" value="Zm00001eb303160_P004"/>
    <property type="gene ID" value="Zm00001eb303160"/>
</dbReference>
<dbReference type="GeneID" id="606401"/>
<dbReference type="Gramene" id="Zm00001eb303160_T004">
    <property type="protein sequence ID" value="Zm00001eb303160_P004"/>
    <property type="gene ID" value="Zm00001eb303160"/>
</dbReference>
<dbReference type="KEGG" id="zma:606401"/>
<dbReference type="MaizeGDB" id="58096"/>
<dbReference type="HOGENOM" id="CLU_073697_0_0_1"/>
<dbReference type="InParanoid" id="P06677"/>
<dbReference type="OrthoDB" id="671632at2759"/>
<dbReference type="Proteomes" id="UP000007305">
    <property type="component" value="Chromosome 7"/>
</dbReference>
<dbReference type="ExpressionAtlas" id="P06677">
    <property type="expression patterns" value="baseline and differential"/>
</dbReference>
<dbReference type="GO" id="GO:0045735">
    <property type="term" value="F:nutrient reservoir activity"/>
    <property type="evidence" value="ECO:0007669"/>
    <property type="project" value="UniProtKB-KW"/>
</dbReference>
<dbReference type="InterPro" id="IPR052508">
    <property type="entry name" value="Maize_Zein_Storage"/>
</dbReference>
<dbReference type="InterPro" id="IPR002530">
    <property type="entry name" value="Zein"/>
</dbReference>
<dbReference type="PANTHER" id="PTHR48244:SF2">
    <property type="entry name" value="ZEIN-ALPHA 19C2"/>
    <property type="match status" value="1"/>
</dbReference>
<dbReference type="PANTHER" id="PTHR48244">
    <property type="entry name" value="ZEIN-ALPHA A20-RELATED"/>
    <property type="match status" value="1"/>
</dbReference>
<dbReference type="Pfam" id="PF01559">
    <property type="entry name" value="Zein"/>
    <property type="match status" value="1"/>
</dbReference>
<comment type="function">
    <text evidence="6">Zeins are major seed storage proteins.</text>
</comment>
<comment type="subunit">
    <text evidence="3">Interacts with OP10 (via N-terminus).</text>
</comment>
<comment type="miscellaneous">
    <text evidence="5">The alpha zeins of 19 kDa and 22 kDa account for 70% of the total zein fraction. They are encoded by a large multigene family.</text>
</comment>
<comment type="miscellaneous">
    <text evidence="1">Structurally, 22K and 19K zeins are composed of nine adjacent, topologically antiparallel helices clustered within a distorted cylinder.</text>
</comment>
<comment type="similarity">
    <text evidence="5">Belongs to the zein family.</text>
</comment>